<accession>Q98SP2</accession>
<accession>Q9PS47</accession>
<name>VM2J2_BOTJA</name>
<proteinExistence type="evidence at protein level"/>
<sequence length="477" mass="53440">MIEVLLVTICLAAFPYQGSSIILESGNVNDYEVIYPRKVTALPKGAVQPKYEDAMQYELKVNGEPVVLHLEKNKGLFSKDYSETHYSPDGRKITTNPPVEDHCYYHGRIENDADSTASISACNGLKGHFKLQGETYLIEPLKLSDSEAHAVFKFENVEKEDEAPKMCGVTQNWESYEPIKKASQSNLTPEHQRYIELFLVVDHGMFMKYNGNSDKIRRRIHQMVNIMKEAYRYLYIDIALTGVEIWSNKDMINVQPAAPQTLDSFGEWRKTDLLNRKSHDNAQLLTSTDFKDQTIGLAYWGSMCDPKRSTAVIEDHSETDLLVAVTMAHELGHNLGIRHDTGSCSCGGYSCIMAPVISHDIAKYFSDCSYIQCWDFIMKDNPQCILNKQLRTDTVSTPVSGKNFGAGEECDCGTPGNPCCDAVTCKLRPGAQCAEGLCCDQCRFMKEGTVCRRARGDDMDDYCNGISAGCPRNPFHA</sequence>
<reference key="1">
    <citation type="journal article" date="2005" name="Biochem. Biophys. Res. Commun.">
        <title>Molecular cloning, functional expression, and molecular modeling of bothrostatin, a new highly active disintegrin from Bothrops jararaca venom.</title>
        <authorList>
            <person name="Fernandez J.H."/>
            <person name="Silva C.A."/>
            <person name="Assakura M.T."/>
            <person name="Camargo A.C.M."/>
            <person name="Serrano S.M.T."/>
        </authorList>
    </citation>
    <scope>NUCLEOTIDE SEQUENCE [MRNA]</scope>
    <scope>FUNCTION</scope>
    <scope>3D-STRUCTURE MODELING</scope>
    <source>
        <tissue>Venom gland</tissue>
    </source>
</reference>
<reference key="2">
    <citation type="journal article" date="1992" name="Toxicon">
        <title>Purification and characterization of two fibrinolytic enzymes from Bothrops jararaca (jararaca) venom.</title>
        <authorList>
            <person name="Maruyama M."/>
            <person name="Sugiki M."/>
            <person name="Yoshida E."/>
            <person name="Mihara H."/>
            <person name="Nakajima N."/>
        </authorList>
    </citation>
    <scope>PROTEIN SEQUENCE OF 188-236</scope>
    <scope>FUNCTION</scope>
    <scope>ACTIVITY REGULATION</scope>
    <scope>SUBUNIT</scope>
    <source>
        <tissue>Venom</tissue>
    </source>
</reference>
<reference key="3">
    <citation type="journal article" date="1993" name="Enzyme Protein">
        <title>Purification and characterization of low molecular weight fibrinolytic/hemorrhagic enzymes from snake (Bothrops jararaca) venom.</title>
        <authorList>
            <person name="Maruyama M."/>
            <person name="Tanigawa M."/>
            <person name="Sugiki M."/>
            <person name="Yoshida E."/>
            <person name="Mihara H."/>
        </authorList>
    </citation>
    <scope>CATALYTIC ACTIVITY</scope>
</reference>
<feature type="signal peptide" evidence="3">
    <location>
        <begin position="1"/>
        <end position="20"/>
    </location>
</feature>
<feature type="propeptide" id="PRO_0000326423" evidence="6">
    <location>
        <begin position="21"/>
        <end position="187"/>
    </location>
</feature>
<feature type="chain" id="PRO_0000326424" description="Snake venom metalloproteinase jararafibrase-2">
    <location>
        <begin position="188"/>
        <end position="389"/>
    </location>
</feature>
<feature type="propeptide" id="PRO_0000326425" evidence="1">
    <location>
        <begin position="390"/>
        <end position="404"/>
    </location>
</feature>
<feature type="chain" id="PRO_0000326426" description="Disintegrin bothrostatin">
    <location>
        <begin position="405"/>
        <end position="477"/>
    </location>
</feature>
<feature type="domain" description="Peptidase M12B" evidence="5">
    <location>
        <begin position="193"/>
        <end position="389"/>
    </location>
</feature>
<feature type="domain" description="Disintegrin" evidence="4">
    <location>
        <begin position="396"/>
        <end position="477"/>
    </location>
</feature>
<feature type="short sequence motif" description="Cell attachment site">
    <location>
        <begin position="455"/>
        <end position="457"/>
    </location>
</feature>
<feature type="active site" evidence="5">
    <location>
        <position position="330"/>
    </location>
</feature>
<feature type="binding site" evidence="1">
    <location>
        <position position="196"/>
    </location>
    <ligand>
        <name>Ca(2+)</name>
        <dbReference type="ChEBI" id="CHEBI:29108"/>
    </ligand>
</feature>
<feature type="binding site" evidence="1">
    <location>
        <position position="280"/>
    </location>
    <ligand>
        <name>Ca(2+)</name>
        <dbReference type="ChEBI" id="CHEBI:29108"/>
    </ligand>
</feature>
<feature type="binding site" evidence="5">
    <location>
        <position position="329"/>
    </location>
    <ligand>
        <name>Zn(2+)</name>
        <dbReference type="ChEBI" id="CHEBI:29105"/>
        <note>catalytic</note>
    </ligand>
</feature>
<feature type="binding site" evidence="5">
    <location>
        <position position="333"/>
    </location>
    <ligand>
        <name>Zn(2+)</name>
        <dbReference type="ChEBI" id="CHEBI:29105"/>
        <note>catalytic</note>
    </ligand>
</feature>
<feature type="binding site" evidence="5">
    <location>
        <position position="339"/>
    </location>
    <ligand>
        <name>Zn(2+)</name>
        <dbReference type="ChEBI" id="CHEBI:29105"/>
        <note>catalytic</note>
    </ligand>
</feature>
<feature type="binding site" evidence="1">
    <location>
        <position position="384"/>
    </location>
    <ligand>
        <name>Ca(2+)</name>
        <dbReference type="ChEBI" id="CHEBI:29108"/>
    </ligand>
</feature>
<feature type="binding site" evidence="1">
    <location>
        <position position="387"/>
    </location>
    <ligand>
        <name>Ca(2+)</name>
        <dbReference type="ChEBI" id="CHEBI:29108"/>
    </ligand>
</feature>
<feature type="disulfide bond" evidence="5">
    <location>
        <begin position="304"/>
        <end position="384"/>
    </location>
</feature>
<feature type="disulfide bond" evidence="5">
    <location>
        <begin position="344"/>
        <end position="368"/>
    </location>
</feature>
<feature type="disulfide bond" evidence="5">
    <location>
        <begin position="346"/>
        <end position="351"/>
    </location>
</feature>
<feature type="disulfide bond" evidence="2">
    <location>
        <begin position="410"/>
        <end position="425"/>
    </location>
</feature>
<feature type="disulfide bond" evidence="2">
    <location>
        <begin position="412"/>
        <end position="420"/>
    </location>
</feature>
<feature type="disulfide bond" evidence="2">
    <location>
        <begin position="419"/>
        <end position="442"/>
    </location>
</feature>
<feature type="disulfide bond" evidence="2">
    <location>
        <begin position="433"/>
        <end position="439"/>
    </location>
</feature>
<feature type="disulfide bond" evidence="2">
    <location>
        <begin position="438"/>
        <end position="463"/>
    </location>
</feature>
<feature type="disulfide bond" evidence="2 4">
    <location>
        <begin position="451"/>
        <end position="470"/>
    </location>
</feature>
<feature type="sequence conflict" description="In Ref. 2; AA sequence." evidence="11" ref="2">
    <original>T</original>
    <variation>L</variation>
    <location>
        <position position="188"/>
    </location>
</feature>
<feature type="sequence conflict" description="In Ref. 2; AA sequence." evidence="11" ref="2">
    <original>L</original>
    <variation>I</variation>
    <location>
        <position position="199"/>
    </location>
</feature>
<organism>
    <name type="scientific">Bothrops jararaca</name>
    <name type="common">Jararaca</name>
    <name type="synonym">Bothrops jajaraca</name>
    <dbReference type="NCBI Taxonomy" id="8724"/>
    <lineage>
        <taxon>Eukaryota</taxon>
        <taxon>Metazoa</taxon>
        <taxon>Chordata</taxon>
        <taxon>Craniata</taxon>
        <taxon>Vertebrata</taxon>
        <taxon>Euteleostomi</taxon>
        <taxon>Lepidosauria</taxon>
        <taxon>Squamata</taxon>
        <taxon>Bifurcata</taxon>
        <taxon>Unidentata</taxon>
        <taxon>Episquamata</taxon>
        <taxon>Toxicofera</taxon>
        <taxon>Serpentes</taxon>
        <taxon>Colubroidea</taxon>
        <taxon>Viperidae</taxon>
        <taxon>Crotalinae</taxon>
        <taxon>Bothrops</taxon>
    </lineage>
</organism>
<comment type="function">
    <molecule>Snake venom metalloproteinase jararafibrase-2</molecule>
    <text evidence="1 6 7 8">Impairs hemostasis in the envenomed animal (By similarity). Does not exhibit detectable plasminogen activating activity. Has hemagglutinating activity on red blood cells. Cleaves insulin B chain at '38-Ala-|-Leu-39' and '40-Tyr-|-Leu-41' bonds (PubMed:8087204).</text>
</comment>
<comment type="function">
    <molecule>Disintegrin bothrostatin</molecule>
    <text>This recombinant protein shows high inhibitory activity on collagen-induced platelet aggregation.</text>
</comment>
<comment type="cofactor">
    <cofactor evidence="1">
        <name>Zn(2+)</name>
        <dbReference type="ChEBI" id="CHEBI:29105"/>
    </cofactor>
    <text evidence="1">Binds 1 zinc ion per subunit.</text>
</comment>
<comment type="activity regulation">
    <text evidence="6">Inhibited by 1,10-phenanthroline and EDTA.</text>
</comment>
<comment type="subunit">
    <text evidence="6">Monomer.</text>
</comment>
<comment type="subcellular location">
    <subcellularLocation>
        <location>Secreted</location>
    </subcellularLocation>
</comment>
<comment type="tissue specificity">
    <text>Expressed by the venom gland.</text>
</comment>
<comment type="miscellaneous">
    <text>The disintegrin belongs to the medium disintegrin subfamily.</text>
</comment>
<comment type="similarity">
    <text evidence="11">Belongs to the venom metalloproteinase (M12B) family. P-II subfamily. P-IIa sub-subfamily.</text>
</comment>
<keyword id="KW-0106">Calcium</keyword>
<keyword id="KW-1217">Cell adhesion impairing toxin</keyword>
<keyword id="KW-0903">Direct protein sequencing</keyword>
<keyword id="KW-1015">Disulfide bond</keyword>
<keyword id="KW-1199">Hemostasis impairing toxin</keyword>
<keyword id="KW-0378">Hydrolase</keyword>
<keyword id="KW-0479">Metal-binding</keyword>
<keyword id="KW-0482">Metalloprotease</keyword>
<keyword id="KW-1201">Platelet aggregation inhibiting toxin</keyword>
<keyword id="KW-0645">Protease</keyword>
<keyword id="KW-0964">Secreted</keyword>
<keyword id="KW-0732">Signal</keyword>
<keyword id="KW-0800">Toxin</keyword>
<keyword id="KW-0862">Zinc</keyword>
<keyword id="KW-0865">Zymogen</keyword>
<protein>
    <recommendedName>
        <fullName>Zinc metalloproteinase/disintegrin</fullName>
    </recommendedName>
    <component>
        <recommendedName>
            <fullName evidence="9">Snake venom metalloproteinase jararafibrase-2</fullName>
            <shortName evidence="10">SVMP</shortName>
            <ecNumber evidence="8">3.4.24.-</ecNumber>
        </recommendedName>
        <alternativeName>
            <fullName evidence="9">Jararafibrase II</fullName>
        </alternativeName>
    </component>
    <component>
        <recommendedName>
            <fullName evidence="10">Disintegrin bothrostatin</fullName>
            <shortName evidence="10">D-BTT</shortName>
        </recommendedName>
    </component>
</protein>
<dbReference type="EC" id="3.4.24.-" evidence="8"/>
<dbReference type="EMBL" id="AF345931">
    <property type="protein sequence ID" value="AAK15542.1"/>
    <property type="molecule type" value="mRNA"/>
</dbReference>
<dbReference type="PIR" id="A42766">
    <property type="entry name" value="A42766"/>
</dbReference>
<dbReference type="SMR" id="Q98SP2"/>
<dbReference type="GO" id="GO:0005576">
    <property type="term" value="C:extracellular region"/>
    <property type="evidence" value="ECO:0007669"/>
    <property type="project" value="UniProtKB-SubCell"/>
</dbReference>
<dbReference type="GO" id="GO:0005886">
    <property type="term" value="C:plasma membrane"/>
    <property type="evidence" value="ECO:0007669"/>
    <property type="project" value="TreeGrafter"/>
</dbReference>
<dbReference type="GO" id="GO:0046872">
    <property type="term" value="F:metal ion binding"/>
    <property type="evidence" value="ECO:0007669"/>
    <property type="project" value="UniProtKB-KW"/>
</dbReference>
<dbReference type="GO" id="GO:0004222">
    <property type="term" value="F:metalloendopeptidase activity"/>
    <property type="evidence" value="ECO:0007669"/>
    <property type="project" value="InterPro"/>
</dbReference>
<dbReference type="GO" id="GO:0090729">
    <property type="term" value="F:toxin activity"/>
    <property type="evidence" value="ECO:0007669"/>
    <property type="project" value="UniProtKB-KW"/>
</dbReference>
<dbReference type="GO" id="GO:0006508">
    <property type="term" value="P:proteolysis"/>
    <property type="evidence" value="ECO:0007669"/>
    <property type="project" value="UniProtKB-KW"/>
</dbReference>
<dbReference type="CDD" id="cd04269">
    <property type="entry name" value="ZnMc_adamalysin_II_like"/>
    <property type="match status" value="1"/>
</dbReference>
<dbReference type="FunFam" id="3.40.390.10:FF:000002">
    <property type="entry name" value="Disintegrin and metalloproteinase domain-containing protein 22"/>
    <property type="match status" value="1"/>
</dbReference>
<dbReference type="FunFam" id="4.10.70.10:FF:000005">
    <property type="entry name" value="Zinc metalloproteinase/disintegrin"/>
    <property type="match status" value="1"/>
</dbReference>
<dbReference type="Gene3D" id="3.40.390.10">
    <property type="entry name" value="Collagenase (Catalytic Domain)"/>
    <property type="match status" value="1"/>
</dbReference>
<dbReference type="Gene3D" id="4.10.70.10">
    <property type="entry name" value="Disintegrin domain"/>
    <property type="match status" value="1"/>
</dbReference>
<dbReference type="InterPro" id="IPR018358">
    <property type="entry name" value="Disintegrin_CS"/>
</dbReference>
<dbReference type="InterPro" id="IPR001762">
    <property type="entry name" value="Disintegrin_dom"/>
</dbReference>
<dbReference type="InterPro" id="IPR036436">
    <property type="entry name" value="Disintegrin_dom_sf"/>
</dbReference>
<dbReference type="InterPro" id="IPR024079">
    <property type="entry name" value="MetalloPept_cat_dom_sf"/>
</dbReference>
<dbReference type="InterPro" id="IPR001590">
    <property type="entry name" value="Peptidase_M12B"/>
</dbReference>
<dbReference type="InterPro" id="IPR002870">
    <property type="entry name" value="Peptidase_M12B_N"/>
</dbReference>
<dbReference type="InterPro" id="IPR034027">
    <property type="entry name" value="Reprolysin_adamalysin"/>
</dbReference>
<dbReference type="PANTHER" id="PTHR11905">
    <property type="entry name" value="ADAM A DISINTEGRIN AND METALLOPROTEASE DOMAIN"/>
    <property type="match status" value="1"/>
</dbReference>
<dbReference type="PANTHER" id="PTHR11905:SF32">
    <property type="entry name" value="DISINTEGRIN AND METALLOPROTEINASE DOMAIN-CONTAINING PROTEIN 28"/>
    <property type="match status" value="1"/>
</dbReference>
<dbReference type="Pfam" id="PF00200">
    <property type="entry name" value="Disintegrin"/>
    <property type="match status" value="1"/>
</dbReference>
<dbReference type="Pfam" id="PF01562">
    <property type="entry name" value="Pep_M12B_propep"/>
    <property type="match status" value="1"/>
</dbReference>
<dbReference type="Pfam" id="PF01421">
    <property type="entry name" value="Reprolysin"/>
    <property type="match status" value="1"/>
</dbReference>
<dbReference type="PRINTS" id="PR00289">
    <property type="entry name" value="DISINTEGRIN"/>
</dbReference>
<dbReference type="SMART" id="SM00050">
    <property type="entry name" value="DISIN"/>
    <property type="match status" value="1"/>
</dbReference>
<dbReference type="SUPFAM" id="SSF57552">
    <property type="entry name" value="Blood coagulation inhibitor (disintegrin)"/>
    <property type="match status" value="1"/>
</dbReference>
<dbReference type="SUPFAM" id="SSF55486">
    <property type="entry name" value="Metalloproteases ('zincins'), catalytic domain"/>
    <property type="match status" value="1"/>
</dbReference>
<dbReference type="PROSITE" id="PS50215">
    <property type="entry name" value="ADAM_MEPRO"/>
    <property type="match status" value="1"/>
</dbReference>
<dbReference type="PROSITE" id="PS00427">
    <property type="entry name" value="DISINTEGRIN_1"/>
    <property type="match status" value="1"/>
</dbReference>
<dbReference type="PROSITE" id="PS50214">
    <property type="entry name" value="DISINTEGRIN_2"/>
    <property type="match status" value="1"/>
</dbReference>
<dbReference type="PROSITE" id="PS00142">
    <property type="entry name" value="ZINC_PROTEASE"/>
    <property type="match status" value="1"/>
</dbReference>
<evidence type="ECO:0000250" key="1"/>
<evidence type="ECO:0000250" key="2">
    <source>
        <dbReference type="UniProtKB" id="Q0NZX5"/>
    </source>
</evidence>
<evidence type="ECO:0000255" key="3"/>
<evidence type="ECO:0000255" key="4">
    <source>
        <dbReference type="PROSITE-ProRule" id="PRU00068"/>
    </source>
</evidence>
<evidence type="ECO:0000255" key="5">
    <source>
        <dbReference type="PROSITE-ProRule" id="PRU00276"/>
    </source>
</evidence>
<evidence type="ECO:0000269" key="6">
    <source>
    </source>
</evidence>
<evidence type="ECO:0000269" key="7">
    <source>
    </source>
</evidence>
<evidence type="ECO:0000269" key="8">
    <source>
    </source>
</evidence>
<evidence type="ECO:0000303" key="9">
    <source>
    </source>
</evidence>
<evidence type="ECO:0000303" key="10">
    <source>
    </source>
</evidence>
<evidence type="ECO:0000305" key="11"/>